<dbReference type="EC" id="2.5.1.19" evidence="1"/>
<dbReference type="EMBL" id="CP000675">
    <property type="protein sequence ID" value="ABQ54811.1"/>
    <property type="molecule type" value="Genomic_DNA"/>
</dbReference>
<dbReference type="SMR" id="A5IBR1"/>
<dbReference type="KEGG" id="lpc:LPC_0835"/>
<dbReference type="HOGENOM" id="CLU_024321_0_1_6"/>
<dbReference type="UniPathway" id="UPA00053">
    <property type="reaction ID" value="UER00089"/>
</dbReference>
<dbReference type="GO" id="GO:0005737">
    <property type="term" value="C:cytoplasm"/>
    <property type="evidence" value="ECO:0007669"/>
    <property type="project" value="UniProtKB-SubCell"/>
</dbReference>
<dbReference type="GO" id="GO:0003866">
    <property type="term" value="F:3-phosphoshikimate 1-carboxyvinyltransferase activity"/>
    <property type="evidence" value="ECO:0007669"/>
    <property type="project" value="UniProtKB-UniRule"/>
</dbReference>
<dbReference type="GO" id="GO:0008652">
    <property type="term" value="P:amino acid biosynthetic process"/>
    <property type="evidence" value="ECO:0007669"/>
    <property type="project" value="UniProtKB-KW"/>
</dbReference>
<dbReference type="GO" id="GO:0009073">
    <property type="term" value="P:aromatic amino acid family biosynthetic process"/>
    <property type="evidence" value="ECO:0007669"/>
    <property type="project" value="UniProtKB-KW"/>
</dbReference>
<dbReference type="GO" id="GO:0009423">
    <property type="term" value="P:chorismate biosynthetic process"/>
    <property type="evidence" value="ECO:0007669"/>
    <property type="project" value="UniProtKB-UniRule"/>
</dbReference>
<dbReference type="CDD" id="cd01556">
    <property type="entry name" value="EPSP_synthase"/>
    <property type="match status" value="1"/>
</dbReference>
<dbReference type="FunFam" id="3.65.10.10:FF:000005">
    <property type="entry name" value="3-phosphoshikimate 1-carboxyvinyltransferase"/>
    <property type="match status" value="1"/>
</dbReference>
<dbReference type="FunFam" id="3.65.10.10:FF:000006">
    <property type="entry name" value="3-phosphoshikimate 1-carboxyvinyltransferase"/>
    <property type="match status" value="1"/>
</dbReference>
<dbReference type="Gene3D" id="3.65.10.10">
    <property type="entry name" value="Enolpyruvate transferase domain"/>
    <property type="match status" value="2"/>
</dbReference>
<dbReference type="HAMAP" id="MF_00210">
    <property type="entry name" value="EPSP_synth"/>
    <property type="match status" value="1"/>
</dbReference>
<dbReference type="InterPro" id="IPR001986">
    <property type="entry name" value="Enolpyruvate_Tfrase_dom"/>
</dbReference>
<dbReference type="InterPro" id="IPR036968">
    <property type="entry name" value="Enolpyruvate_Tfrase_sf"/>
</dbReference>
<dbReference type="InterPro" id="IPR006264">
    <property type="entry name" value="EPSP_synthase"/>
</dbReference>
<dbReference type="InterPro" id="IPR023193">
    <property type="entry name" value="EPSP_synthase_CS"/>
</dbReference>
<dbReference type="InterPro" id="IPR013792">
    <property type="entry name" value="RNA3'P_cycl/enolpyr_Trfase_a/b"/>
</dbReference>
<dbReference type="NCBIfam" id="TIGR01356">
    <property type="entry name" value="aroA"/>
    <property type="match status" value="1"/>
</dbReference>
<dbReference type="PANTHER" id="PTHR21090">
    <property type="entry name" value="AROM/DEHYDROQUINATE SYNTHASE"/>
    <property type="match status" value="1"/>
</dbReference>
<dbReference type="PANTHER" id="PTHR21090:SF5">
    <property type="entry name" value="PENTAFUNCTIONAL AROM POLYPEPTIDE"/>
    <property type="match status" value="1"/>
</dbReference>
<dbReference type="Pfam" id="PF00275">
    <property type="entry name" value="EPSP_synthase"/>
    <property type="match status" value="1"/>
</dbReference>
<dbReference type="PIRSF" id="PIRSF000505">
    <property type="entry name" value="EPSPS"/>
    <property type="match status" value="1"/>
</dbReference>
<dbReference type="SUPFAM" id="SSF55205">
    <property type="entry name" value="EPT/RTPC-like"/>
    <property type="match status" value="1"/>
</dbReference>
<dbReference type="PROSITE" id="PS00104">
    <property type="entry name" value="EPSP_SYNTHASE_1"/>
    <property type="match status" value="1"/>
</dbReference>
<dbReference type="PROSITE" id="PS00885">
    <property type="entry name" value="EPSP_SYNTHASE_2"/>
    <property type="match status" value="1"/>
</dbReference>
<comment type="function">
    <text evidence="1">Catalyzes the transfer of the enolpyruvyl moiety of phosphoenolpyruvate (PEP) to the 5-hydroxyl of shikimate-3-phosphate (S3P) to produce enolpyruvyl shikimate-3-phosphate and inorganic phosphate.</text>
</comment>
<comment type="catalytic activity">
    <reaction evidence="1">
        <text>3-phosphoshikimate + phosphoenolpyruvate = 5-O-(1-carboxyvinyl)-3-phosphoshikimate + phosphate</text>
        <dbReference type="Rhea" id="RHEA:21256"/>
        <dbReference type="ChEBI" id="CHEBI:43474"/>
        <dbReference type="ChEBI" id="CHEBI:57701"/>
        <dbReference type="ChEBI" id="CHEBI:58702"/>
        <dbReference type="ChEBI" id="CHEBI:145989"/>
        <dbReference type="EC" id="2.5.1.19"/>
    </reaction>
    <physiologicalReaction direction="left-to-right" evidence="1">
        <dbReference type="Rhea" id="RHEA:21257"/>
    </physiologicalReaction>
</comment>
<comment type="pathway">
    <text evidence="1">Metabolic intermediate biosynthesis; chorismate biosynthesis; chorismate from D-erythrose 4-phosphate and phosphoenolpyruvate: step 6/7.</text>
</comment>
<comment type="subunit">
    <text evidence="1">Monomer.</text>
</comment>
<comment type="subcellular location">
    <subcellularLocation>
        <location evidence="1">Cytoplasm</location>
    </subcellularLocation>
</comment>
<comment type="similarity">
    <text evidence="1">Belongs to the EPSP synthase family.</text>
</comment>
<evidence type="ECO:0000255" key="1">
    <source>
        <dbReference type="HAMAP-Rule" id="MF_00210"/>
    </source>
</evidence>
<gene>
    <name evidence="1" type="primary">aroA</name>
    <name type="ordered locus">LPC_0835</name>
</gene>
<proteinExistence type="inferred from homology"/>
<accession>A5IBR1</accession>
<feature type="chain" id="PRO_0000325354" description="3-phosphoshikimate 1-carboxyvinyltransferase">
    <location>
        <begin position="1"/>
        <end position="433"/>
    </location>
</feature>
<feature type="active site" description="Proton acceptor" evidence="1">
    <location>
        <position position="315"/>
    </location>
</feature>
<feature type="binding site" evidence="1">
    <location>
        <position position="22"/>
    </location>
    <ligand>
        <name>3-phosphoshikimate</name>
        <dbReference type="ChEBI" id="CHEBI:145989"/>
    </ligand>
</feature>
<feature type="binding site" evidence="1">
    <location>
        <position position="22"/>
    </location>
    <ligand>
        <name>phosphoenolpyruvate</name>
        <dbReference type="ChEBI" id="CHEBI:58702"/>
    </ligand>
</feature>
<feature type="binding site" evidence="1">
    <location>
        <position position="23"/>
    </location>
    <ligand>
        <name>3-phosphoshikimate</name>
        <dbReference type="ChEBI" id="CHEBI:145989"/>
    </ligand>
</feature>
<feature type="binding site" evidence="1">
    <location>
        <position position="27"/>
    </location>
    <ligand>
        <name>3-phosphoshikimate</name>
        <dbReference type="ChEBI" id="CHEBI:145989"/>
    </ligand>
</feature>
<feature type="binding site" evidence="1">
    <location>
        <position position="95"/>
    </location>
    <ligand>
        <name>phosphoenolpyruvate</name>
        <dbReference type="ChEBI" id="CHEBI:58702"/>
    </ligand>
</feature>
<feature type="binding site" evidence="1">
    <location>
        <position position="123"/>
    </location>
    <ligand>
        <name>phosphoenolpyruvate</name>
        <dbReference type="ChEBI" id="CHEBI:58702"/>
    </ligand>
</feature>
<feature type="binding site" evidence="1">
    <location>
        <position position="167"/>
    </location>
    <ligand>
        <name>3-phosphoshikimate</name>
        <dbReference type="ChEBI" id="CHEBI:145989"/>
    </ligand>
</feature>
<feature type="binding site" evidence="1">
    <location>
        <position position="169"/>
    </location>
    <ligand>
        <name>3-phosphoshikimate</name>
        <dbReference type="ChEBI" id="CHEBI:145989"/>
    </ligand>
</feature>
<feature type="binding site" evidence="1">
    <location>
        <position position="169"/>
    </location>
    <ligand>
        <name>phosphoenolpyruvate</name>
        <dbReference type="ChEBI" id="CHEBI:58702"/>
    </ligand>
</feature>
<feature type="binding site" evidence="1">
    <location>
        <position position="315"/>
    </location>
    <ligand>
        <name>3-phosphoshikimate</name>
        <dbReference type="ChEBI" id="CHEBI:145989"/>
    </ligand>
</feature>
<feature type="binding site" evidence="1">
    <location>
        <position position="342"/>
    </location>
    <ligand>
        <name>3-phosphoshikimate</name>
        <dbReference type="ChEBI" id="CHEBI:145989"/>
    </ligand>
</feature>
<feature type="binding site" evidence="1">
    <location>
        <position position="346"/>
    </location>
    <ligand>
        <name>phosphoenolpyruvate</name>
        <dbReference type="ChEBI" id="CHEBI:58702"/>
    </ligand>
</feature>
<feature type="binding site" evidence="1">
    <location>
        <position position="387"/>
    </location>
    <ligand>
        <name>phosphoenolpyruvate</name>
        <dbReference type="ChEBI" id="CHEBI:58702"/>
    </ligand>
</feature>
<keyword id="KW-0028">Amino-acid biosynthesis</keyword>
<keyword id="KW-0057">Aromatic amino acid biosynthesis</keyword>
<keyword id="KW-0963">Cytoplasm</keyword>
<keyword id="KW-0808">Transferase</keyword>
<reference key="1">
    <citation type="submission" date="2006-11" db="EMBL/GenBank/DDBJ databases">
        <title>Identification and characterization of a new conjugation/ type IVA secretion system (trb/tra) of L. pneumophila Corby localized on a mobile genomic island.</title>
        <authorList>
            <person name="Gloeckner G."/>
            <person name="Albert-Weissenberger C."/>
            <person name="Weinmann E."/>
            <person name="Jacobi S."/>
            <person name="Schunder E."/>
            <person name="Steinert M."/>
            <person name="Buchrieser C."/>
            <person name="Hacker J."/>
            <person name="Heuner K."/>
        </authorList>
    </citation>
    <scope>NUCLEOTIDE SEQUENCE [LARGE SCALE GENOMIC DNA]</scope>
    <source>
        <strain>Corby</strain>
    </source>
</reference>
<protein>
    <recommendedName>
        <fullName evidence="1">3-phosphoshikimate 1-carboxyvinyltransferase</fullName>
        <ecNumber evidence="1">2.5.1.19</ecNumber>
    </recommendedName>
    <alternativeName>
        <fullName evidence="1">5-enolpyruvylshikimate-3-phosphate synthase</fullName>
        <shortName evidence="1">EPSP synthase</shortName>
        <shortName evidence="1">EPSPS</shortName>
    </alternativeName>
</protein>
<name>AROA_LEGPC</name>
<sequence length="433" mass="46284">MLNFISKPVVCLKGEITVPGDKSISHRSIIFGAIAIGTSVIDGFLDGEDCIATLKAFQSMGVRIEGPDKQRVIIHGVGKYGLKQPQNIIDCGNSGTSMRLLAGLLAAQQFDSQLTGDESLLKRPMLRISRPLSQMGADVTTQDGKPPILIKGGKKLNGIHYVMPEASAQVKSCLLLAGMYAEGQTKITENAVSRDHTERMLRTFSYPVQIQDGVIVIDRNGECHGTRLNIPGDISSAAFFIVAASITPGSDILIRNVGINPTRTGIIHILTEMGADIKVLNQRAYGEEPVADLHIRYSQLKGIDIPVSMVPLAIDEFPVIFIAAACAQGKTTLHGAKELRLKESDRIGAMVDGLNQLGVHAEGFDDGILIEGGSIQGGEVNSRGDHRIAMSFAIAGAVASAPVTIKNCANVATSFPSFVTTANILHFQIEEYS</sequence>
<organism>
    <name type="scientific">Legionella pneumophila (strain Corby)</name>
    <dbReference type="NCBI Taxonomy" id="400673"/>
    <lineage>
        <taxon>Bacteria</taxon>
        <taxon>Pseudomonadati</taxon>
        <taxon>Pseudomonadota</taxon>
        <taxon>Gammaproteobacteria</taxon>
        <taxon>Legionellales</taxon>
        <taxon>Legionellaceae</taxon>
        <taxon>Legionella</taxon>
    </lineage>
</organism>